<keyword id="KW-0963">Cytoplasm</keyword>
<keyword id="KW-0269">Exonuclease</keyword>
<keyword id="KW-0378">Hydrolase</keyword>
<keyword id="KW-0540">Nuclease</keyword>
<dbReference type="EC" id="3.1.11.6" evidence="1"/>
<dbReference type="EMBL" id="CP000479">
    <property type="protein sequence ID" value="ABK67247.1"/>
    <property type="molecule type" value="Genomic_DNA"/>
</dbReference>
<dbReference type="RefSeq" id="WP_003875383.1">
    <property type="nucleotide sequence ID" value="NC_008595.1"/>
</dbReference>
<dbReference type="SMR" id="A0QC35"/>
<dbReference type="KEGG" id="mav:MAV_1227"/>
<dbReference type="HOGENOM" id="CLU_145918_0_2_11"/>
<dbReference type="Proteomes" id="UP000001574">
    <property type="component" value="Chromosome"/>
</dbReference>
<dbReference type="GO" id="GO:0005829">
    <property type="term" value="C:cytosol"/>
    <property type="evidence" value="ECO:0007669"/>
    <property type="project" value="TreeGrafter"/>
</dbReference>
<dbReference type="GO" id="GO:0009318">
    <property type="term" value="C:exodeoxyribonuclease VII complex"/>
    <property type="evidence" value="ECO:0007669"/>
    <property type="project" value="InterPro"/>
</dbReference>
<dbReference type="GO" id="GO:0008855">
    <property type="term" value="F:exodeoxyribonuclease VII activity"/>
    <property type="evidence" value="ECO:0007669"/>
    <property type="project" value="UniProtKB-UniRule"/>
</dbReference>
<dbReference type="GO" id="GO:0006308">
    <property type="term" value="P:DNA catabolic process"/>
    <property type="evidence" value="ECO:0007669"/>
    <property type="project" value="UniProtKB-UniRule"/>
</dbReference>
<dbReference type="FunFam" id="1.10.287.1040:FF:000004">
    <property type="entry name" value="Exodeoxyribonuclease 7 small subunit"/>
    <property type="match status" value="1"/>
</dbReference>
<dbReference type="Gene3D" id="1.10.287.1040">
    <property type="entry name" value="Exonuclease VII, small subunit"/>
    <property type="match status" value="1"/>
</dbReference>
<dbReference type="HAMAP" id="MF_00337">
    <property type="entry name" value="Exonuc_7_S"/>
    <property type="match status" value="1"/>
</dbReference>
<dbReference type="InterPro" id="IPR003761">
    <property type="entry name" value="Exonuc_VII_S"/>
</dbReference>
<dbReference type="InterPro" id="IPR037004">
    <property type="entry name" value="Exonuc_VII_ssu_sf"/>
</dbReference>
<dbReference type="NCBIfam" id="NF002139">
    <property type="entry name" value="PRK00977.1-3"/>
    <property type="match status" value="1"/>
</dbReference>
<dbReference type="NCBIfam" id="TIGR01280">
    <property type="entry name" value="xseB"/>
    <property type="match status" value="1"/>
</dbReference>
<dbReference type="PANTHER" id="PTHR34137">
    <property type="entry name" value="EXODEOXYRIBONUCLEASE 7 SMALL SUBUNIT"/>
    <property type="match status" value="1"/>
</dbReference>
<dbReference type="PANTHER" id="PTHR34137:SF1">
    <property type="entry name" value="EXODEOXYRIBONUCLEASE 7 SMALL SUBUNIT"/>
    <property type="match status" value="1"/>
</dbReference>
<dbReference type="Pfam" id="PF02609">
    <property type="entry name" value="Exonuc_VII_S"/>
    <property type="match status" value="1"/>
</dbReference>
<dbReference type="SUPFAM" id="SSF116842">
    <property type="entry name" value="XseB-like"/>
    <property type="match status" value="1"/>
</dbReference>
<accession>A0QC35</accession>
<name>EX7S_MYCA1</name>
<organism>
    <name type="scientific">Mycobacterium avium (strain 104)</name>
    <dbReference type="NCBI Taxonomy" id="243243"/>
    <lineage>
        <taxon>Bacteria</taxon>
        <taxon>Bacillati</taxon>
        <taxon>Actinomycetota</taxon>
        <taxon>Actinomycetes</taxon>
        <taxon>Mycobacteriales</taxon>
        <taxon>Mycobacteriaceae</taxon>
        <taxon>Mycobacterium</taxon>
        <taxon>Mycobacterium avium complex (MAC)</taxon>
    </lineage>
</organism>
<comment type="function">
    <text evidence="1">Bidirectionally degrades single-stranded DNA into large acid-insoluble oligonucleotides, which are then degraded further into small acid-soluble oligonucleotides.</text>
</comment>
<comment type="catalytic activity">
    <reaction evidence="1">
        <text>Exonucleolytic cleavage in either 5'- to 3'- or 3'- to 5'-direction to yield nucleoside 5'-phosphates.</text>
        <dbReference type="EC" id="3.1.11.6"/>
    </reaction>
</comment>
<comment type="subunit">
    <text evidence="1">Heterooligomer composed of large and small subunits.</text>
</comment>
<comment type="subcellular location">
    <subcellularLocation>
        <location evidence="1">Cytoplasm</location>
    </subcellularLocation>
</comment>
<comment type="similarity">
    <text evidence="1">Belongs to the XseB family.</text>
</comment>
<feature type="chain" id="PRO_0000303724" description="Exodeoxyribonuclease 7 small subunit">
    <location>
        <begin position="1"/>
        <end position="82"/>
    </location>
</feature>
<evidence type="ECO:0000255" key="1">
    <source>
        <dbReference type="HAMAP-Rule" id="MF_00337"/>
    </source>
</evidence>
<sequence length="82" mass="9023">MANNKKDEQAAAATPISRLGYEACRDELIEVVRQLEQGGLDLDASLNLWERGEQLAKRCEEHLAGARKRIEDALAAGEADDD</sequence>
<reference key="1">
    <citation type="submission" date="2006-10" db="EMBL/GenBank/DDBJ databases">
        <authorList>
            <person name="Fleischmann R.D."/>
            <person name="Dodson R.J."/>
            <person name="Haft D.H."/>
            <person name="Merkel J.S."/>
            <person name="Nelson W.C."/>
            <person name="Fraser C.M."/>
        </authorList>
    </citation>
    <scope>NUCLEOTIDE SEQUENCE [LARGE SCALE GENOMIC DNA]</scope>
    <source>
        <strain>104</strain>
    </source>
</reference>
<gene>
    <name evidence="1" type="primary">xseB</name>
    <name type="ordered locus">MAV_1227</name>
</gene>
<proteinExistence type="inferred from homology"/>
<protein>
    <recommendedName>
        <fullName evidence="1">Exodeoxyribonuclease 7 small subunit</fullName>
        <ecNumber evidence="1">3.1.11.6</ecNumber>
    </recommendedName>
    <alternativeName>
        <fullName evidence="1">Exodeoxyribonuclease VII small subunit</fullName>
        <shortName evidence="1">Exonuclease VII small subunit</shortName>
    </alternativeName>
</protein>